<protein>
    <recommendedName>
        <fullName evidence="1">DNA ligase</fullName>
        <ecNumber evidence="1">6.5.1.2</ecNumber>
    </recommendedName>
    <alternativeName>
        <fullName evidence="1">Polydeoxyribonucleotide synthase [NAD(+)]</fullName>
    </alternativeName>
</protein>
<proteinExistence type="inferred from homology"/>
<name>DNLJ_KOCRD</name>
<sequence length="766" mass="83591">MSTVNAKGAKPATDANGQSLNPEEPSEALREEYAQLSDRVREARAAYYVHDQPVISDAEYDQLYRSLEEFEALHPELKANDSPTQEVGGEVGAAFSPVKHLEKMYSLEDVFSTDELVAWLERAQKQVAELPGAPEVAWLSEVKIDGLAVNLLYRDGVLVRAATRGDGTTGEDITHNVATIKTIPQRLSGENLPEEVEVRGEVFISSKDFRTLNEAMVEEGRAPFANPRNAAAGSLRQKDPQVTARRPLSMFVHGIGYVRGVDLETQSEAYEILRGWGLPVSPYSRVLSTVAEVLEFIAEFGDKRHALLHEIDGIVVKVDDRRTQFRLGYTSRVPRWAVAYKYPPEEVNTTLVDILVNVGRTGRVTPFGLMDPVRVAGSTVEMATLHNQDMVRAKGVLIGDTVVLRKAGDVIPEIVGPVVALRDGSEREFVMPAECPSCGTPLRPAKEGDVDIRCPNAETCPSQLKERVNHAAGRGAFDIEALGEEAARALTQPVPLDAPDGTELSVPPLRNEAGLFDLTPEDLRDVMVWRDARRTVTDEETGEKVQRVTPELVPYFWTKPTKARPSVPSKTTEQMFAQLEQAKDTELWRVLVALSIRHVGPTAARSLATSLRSMDAIRQADPETLAGTDGVGPVIAQAVQEFFAEPWRRRVVEQWAAAGVRMEEEVDESTPRTLEGVTVVVTGSLEGYSRDSAKEAILKRGGKASGSVSKKTHFLVAGDNAGTKLDKAESLGVPVLDEAGFEQLLAQGPEAFGDRADAADQPAAGE</sequence>
<evidence type="ECO:0000255" key="1">
    <source>
        <dbReference type="HAMAP-Rule" id="MF_01588"/>
    </source>
</evidence>
<evidence type="ECO:0000256" key="2">
    <source>
        <dbReference type="SAM" id="MobiDB-lite"/>
    </source>
</evidence>
<feature type="chain" id="PRO_0000380402" description="DNA ligase">
    <location>
        <begin position="1"/>
        <end position="766"/>
    </location>
</feature>
<feature type="domain" description="BRCT" evidence="1">
    <location>
        <begin position="669"/>
        <end position="758"/>
    </location>
</feature>
<feature type="region of interest" description="Disordered" evidence="2">
    <location>
        <begin position="1"/>
        <end position="30"/>
    </location>
</feature>
<feature type="region of interest" description="Disordered" evidence="2">
    <location>
        <begin position="747"/>
        <end position="766"/>
    </location>
</feature>
<feature type="active site" description="N6-AMP-lysine intermediate" evidence="1">
    <location>
        <position position="143"/>
    </location>
</feature>
<feature type="binding site" evidence="1">
    <location>
        <begin position="57"/>
        <end position="61"/>
    </location>
    <ligand>
        <name>NAD(+)</name>
        <dbReference type="ChEBI" id="CHEBI:57540"/>
    </ligand>
</feature>
<feature type="binding site" evidence="1">
    <location>
        <begin position="106"/>
        <end position="107"/>
    </location>
    <ligand>
        <name>NAD(+)</name>
        <dbReference type="ChEBI" id="CHEBI:57540"/>
    </ligand>
</feature>
<feature type="binding site" evidence="1">
    <location>
        <position position="141"/>
    </location>
    <ligand>
        <name>NAD(+)</name>
        <dbReference type="ChEBI" id="CHEBI:57540"/>
    </ligand>
</feature>
<feature type="binding site" evidence="1">
    <location>
        <position position="164"/>
    </location>
    <ligand>
        <name>NAD(+)</name>
        <dbReference type="ChEBI" id="CHEBI:57540"/>
    </ligand>
</feature>
<feature type="binding site" evidence="1">
    <location>
        <position position="201"/>
    </location>
    <ligand>
        <name>NAD(+)</name>
        <dbReference type="ChEBI" id="CHEBI:57540"/>
    </ligand>
</feature>
<feature type="binding site" evidence="1">
    <location>
        <position position="317"/>
    </location>
    <ligand>
        <name>NAD(+)</name>
        <dbReference type="ChEBI" id="CHEBI:57540"/>
    </ligand>
</feature>
<feature type="binding site" evidence="1">
    <location>
        <position position="341"/>
    </location>
    <ligand>
        <name>NAD(+)</name>
        <dbReference type="ChEBI" id="CHEBI:57540"/>
    </ligand>
</feature>
<feature type="binding site" evidence="1">
    <location>
        <position position="435"/>
    </location>
    <ligand>
        <name>Zn(2+)</name>
        <dbReference type="ChEBI" id="CHEBI:29105"/>
    </ligand>
</feature>
<feature type="binding site" evidence="1">
    <location>
        <position position="438"/>
    </location>
    <ligand>
        <name>Zn(2+)</name>
        <dbReference type="ChEBI" id="CHEBI:29105"/>
    </ligand>
</feature>
<feature type="binding site" evidence="1">
    <location>
        <position position="454"/>
    </location>
    <ligand>
        <name>Zn(2+)</name>
        <dbReference type="ChEBI" id="CHEBI:29105"/>
    </ligand>
</feature>
<feature type="binding site" evidence="1">
    <location>
        <position position="460"/>
    </location>
    <ligand>
        <name>Zn(2+)</name>
        <dbReference type="ChEBI" id="CHEBI:29105"/>
    </ligand>
</feature>
<accession>B2GL64</accession>
<organism>
    <name type="scientific">Kocuria rhizophila (strain ATCC 9341 / DSM 348 / NBRC 103217 / DC2201)</name>
    <dbReference type="NCBI Taxonomy" id="378753"/>
    <lineage>
        <taxon>Bacteria</taxon>
        <taxon>Bacillati</taxon>
        <taxon>Actinomycetota</taxon>
        <taxon>Actinomycetes</taxon>
        <taxon>Micrococcales</taxon>
        <taxon>Micrococcaceae</taxon>
        <taxon>Kocuria</taxon>
    </lineage>
</organism>
<gene>
    <name evidence="1" type="primary">ligA</name>
    <name type="ordered locus">KRH_16730</name>
</gene>
<keyword id="KW-0227">DNA damage</keyword>
<keyword id="KW-0234">DNA repair</keyword>
<keyword id="KW-0235">DNA replication</keyword>
<keyword id="KW-0436">Ligase</keyword>
<keyword id="KW-0460">Magnesium</keyword>
<keyword id="KW-0464">Manganese</keyword>
<keyword id="KW-0479">Metal-binding</keyword>
<keyword id="KW-0520">NAD</keyword>
<keyword id="KW-1185">Reference proteome</keyword>
<keyword id="KW-0862">Zinc</keyword>
<comment type="function">
    <text evidence="1">DNA ligase that catalyzes the formation of phosphodiester linkages between 5'-phosphoryl and 3'-hydroxyl groups in double-stranded DNA using NAD as a coenzyme and as the energy source for the reaction. It is essential for DNA replication and repair of damaged DNA.</text>
</comment>
<comment type="catalytic activity">
    <reaction evidence="1">
        <text>NAD(+) + (deoxyribonucleotide)n-3'-hydroxyl + 5'-phospho-(deoxyribonucleotide)m = (deoxyribonucleotide)n+m + AMP + beta-nicotinamide D-nucleotide.</text>
        <dbReference type="EC" id="6.5.1.2"/>
    </reaction>
</comment>
<comment type="cofactor">
    <cofactor evidence="1">
        <name>Mg(2+)</name>
        <dbReference type="ChEBI" id="CHEBI:18420"/>
    </cofactor>
    <cofactor evidence="1">
        <name>Mn(2+)</name>
        <dbReference type="ChEBI" id="CHEBI:29035"/>
    </cofactor>
</comment>
<comment type="similarity">
    <text evidence="1">Belongs to the NAD-dependent DNA ligase family. LigA subfamily.</text>
</comment>
<reference key="1">
    <citation type="journal article" date="2008" name="J. Bacteriol.">
        <title>Complete genome sequence of the soil actinomycete Kocuria rhizophila.</title>
        <authorList>
            <person name="Takarada H."/>
            <person name="Sekine M."/>
            <person name="Kosugi H."/>
            <person name="Matsuo Y."/>
            <person name="Fujisawa T."/>
            <person name="Omata S."/>
            <person name="Kishi E."/>
            <person name="Shimizu A."/>
            <person name="Tsukatani N."/>
            <person name="Tanikawa S."/>
            <person name="Fujita N."/>
            <person name="Harayama S."/>
        </authorList>
    </citation>
    <scope>NUCLEOTIDE SEQUENCE [LARGE SCALE GENOMIC DNA]</scope>
    <source>
        <strain>ATCC 9341 / DSM 348 / NBRC 103217 / DC2201</strain>
    </source>
</reference>
<dbReference type="EC" id="6.5.1.2" evidence="1"/>
<dbReference type="EMBL" id="AP009152">
    <property type="protein sequence ID" value="BAG30020.1"/>
    <property type="molecule type" value="Genomic_DNA"/>
</dbReference>
<dbReference type="SMR" id="B2GL64"/>
<dbReference type="STRING" id="378753.KRH_16730"/>
<dbReference type="KEGG" id="krh:KRH_16730"/>
<dbReference type="eggNOG" id="COG0272">
    <property type="taxonomic scope" value="Bacteria"/>
</dbReference>
<dbReference type="HOGENOM" id="CLU_007764_2_1_11"/>
<dbReference type="OrthoDB" id="9759736at2"/>
<dbReference type="Proteomes" id="UP000008838">
    <property type="component" value="Chromosome"/>
</dbReference>
<dbReference type="GO" id="GO:0005829">
    <property type="term" value="C:cytosol"/>
    <property type="evidence" value="ECO:0007669"/>
    <property type="project" value="TreeGrafter"/>
</dbReference>
<dbReference type="GO" id="GO:0003911">
    <property type="term" value="F:DNA ligase (NAD+) activity"/>
    <property type="evidence" value="ECO:0007669"/>
    <property type="project" value="UniProtKB-UniRule"/>
</dbReference>
<dbReference type="GO" id="GO:0046872">
    <property type="term" value="F:metal ion binding"/>
    <property type="evidence" value="ECO:0007669"/>
    <property type="project" value="UniProtKB-KW"/>
</dbReference>
<dbReference type="GO" id="GO:0006281">
    <property type="term" value="P:DNA repair"/>
    <property type="evidence" value="ECO:0007669"/>
    <property type="project" value="UniProtKB-KW"/>
</dbReference>
<dbReference type="GO" id="GO:0006260">
    <property type="term" value="P:DNA replication"/>
    <property type="evidence" value="ECO:0007669"/>
    <property type="project" value="UniProtKB-KW"/>
</dbReference>
<dbReference type="CDD" id="cd17748">
    <property type="entry name" value="BRCT_DNA_ligase_like"/>
    <property type="match status" value="1"/>
</dbReference>
<dbReference type="CDD" id="cd00114">
    <property type="entry name" value="LIGANc"/>
    <property type="match status" value="1"/>
</dbReference>
<dbReference type="FunFam" id="1.10.150.20:FF:000006">
    <property type="entry name" value="DNA ligase"/>
    <property type="match status" value="1"/>
</dbReference>
<dbReference type="FunFam" id="2.40.50.140:FF:000012">
    <property type="entry name" value="DNA ligase"/>
    <property type="match status" value="1"/>
</dbReference>
<dbReference type="FunFam" id="3.30.470.30:FF:000001">
    <property type="entry name" value="DNA ligase"/>
    <property type="match status" value="1"/>
</dbReference>
<dbReference type="FunFam" id="3.40.50.10190:FF:000054">
    <property type="entry name" value="DNA ligase"/>
    <property type="match status" value="1"/>
</dbReference>
<dbReference type="Gene3D" id="6.20.10.30">
    <property type="match status" value="1"/>
</dbReference>
<dbReference type="Gene3D" id="1.10.150.20">
    <property type="entry name" value="5' to 3' exonuclease, C-terminal subdomain"/>
    <property type="match status" value="2"/>
</dbReference>
<dbReference type="Gene3D" id="3.40.50.10190">
    <property type="entry name" value="BRCT domain"/>
    <property type="match status" value="1"/>
</dbReference>
<dbReference type="Gene3D" id="3.30.470.30">
    <property type="entry name" value="DNA ligase/mRNA capping enzyme"/>
    <property type="match status" value="1"/>
</dbReference>
<dbReference type="Gene3D" id="1.10.287.610">
    <property type="entry name" value="Helix hairpin bin"/>
    <property type="match status" value="1"/>
</dbReference>
<dbReference type="Gene3D" id="2.40.50.140">
    <property type="entry name" value="Nucleic acid-binding proteins"/>
    <property type="match status" value="1"/>
</dbReference>
<dbReference type="HAMAP" id="MF_01588">
    <property type="entry name" value="DNA_ligase_A"/>
    <property type="match status" value="1"/>
</dbReference>
<dbReference type="InterPro" id="IPR001357">
    <property type="entry name" value="BRCT_dom"/>
</dbReference>
<dbReference type="InterPro" id="IPR036420">
    <property type="entry name" value="BRCT_dom_sf"/>
</dbReference>
<dbReference type="InterPro" id="IPR041663">
    <property type="entry name" value="DisA/LigA_HHH"/>
</dbReference>
<dbReference type="InterPro" id="IPR001679">
    <property type="entry name" value="DNA_ligase"/>
</dbReference>
<dbReference type="InterPro" id="IPR018239">
    <property type="entry name" value="DNA_ligase_AS"/>
</dbReference>
<dbReference type="InterPro" id="IPR033136">
    <property type="entry name" value="DNA_ligase_CS"/>
</dbReference>
<dbReference type="InterPro" id="IPR013839">
    <property type="entry name" value="DNAligase_adenylation"/>
</dbReference>
<dbReference type="InterPro" id="IPR013840">
    <property type="entry name" value="DNAligase_N"/>
</dbReference>
<dbReference type="InterPro" id="IPR012340">
    <property type="entry name" value="NA-bd_OB-fold"/>
</dbReference>
<dbReference type="InterPro" id="IPR004150">
    <property type="entry name" value="NAD_DNA_ligase_OB"/>
</dbReference>
<dbReference type="InterPro" id="IPR010994">
    <property type="entry name" value="RuvA_2-like"/>
</dbReference>
<dbReference type="InterPro" id="IPR004149">
    <property type="entry name" value="Znf_DNAligase_C4"/>
</dbReference>
<dbReference type="NCBIfam" id="TIGR00575">
    <property type="entry name" value="dnlj"/>
    <property type="match status" value="1"/>
</dbReference>
<dbReference type="NCBIfam" id="NF005932">
    <property type="entry name" value="PRK07956.1"/>
    <property type="match status" value="1"/>
</dbReference>
<dbReference type="PANTHER" id="PTHR23389">
    <property type="entry name" value="CHROMOSOME TRANSMISSION FIDELITY FACTOR 18"/>
    <property type="match status" value="1"/>
</dbReference>
<dbReference type="PANTHER" id="PTHR23389:SF9">
    <property type="entry name" value="DNA LIGASE"/>
    <property type="match status" value="1"/>
</dbReference>
<dbReference type="Pfam" id="PF00533">
    <property type="entry name" value="BRCT"/>
    <property type="match status" value="1"/>
</dbReference>
<dbReference type="Pfam" id="PF01653">
    <property type="entry name" value="DNA_ligase_aden"/>
    <property type="match status" value="1"/>
</dbReference>
<dbReference type="Pfam" id="PF03120">
    <property type="entry name" value="DNA_ligase_OB"/>
    <property type="match status" value="1"/>
</dbReference>
<dbReference type="Pfam" id="PF03119">
    <property type="entry name" value="DNA_ligase_ZBD"/>
    <property type="match status" value="1"/>
</dbReference>
<dbReference type="Pfam" id="PF12826">
    <property type="entry name" value="HHH_2"/>
    <property type="match status" value="1"/>
</dbReference>
<dbReference type="Pfam" id="PF22745">
    <property type="entry name" value="Nlig-Ia"/>
    <property type="match status" value="1"/>
</dbReference>
<dbReference type="PIRSF" id="PIRSF001604">
    <property type="entry name" value="LigA"/>
    <property type="match status" value="1"/>
</dbReference>
<dbReference type="SMART" id="SM00292">
    <property type="entry name" value="BRCT"/>
    <property type="match status" value="1"/>
</dbReference>
<dbReference type="SMART" id="SM00532">
    <property type="entry name" value="LIGANc"/>
    <property type="match status" value="1"/>
</dbReference>
<dbReference type="SUPFAM" id="SSF52113">
    <property type="entry name" value="BRCT domain"/>
    <property type="match status" value="1"/>
</dbReference>
<dbReference type="SUPFAM" id="SSF56091">
    <property type="entry name" value="DNA ligase/mRNA capping enzyme, catalytic domain"/>
    <property type="match status" value="1"/>
</dbReference>
<dbReference type="SUPFAM" id="SSF50249">
    <property type="entry name" value="Nucleic acid-binding proteins"/>
    <property type="match status" value="1"/>
</dbReference>
<dbReference type="SUPFAM" id="SSF47781">
    <property type="entry name" value="RuvA domain 2-like"/>
    <property type="match status" value="1"/>
</dbReference>
<dbReference type="PROSITE" id="PS50172">
    <property type="entry name" value="BRCT"/>
    <property type="match status" value="1"/>
</dbReference>
<dbReference type="PROSITE" id="PS01055">
    <property type="entry name" value="DNA_LIGASE_N1"/>
    <property type="match status" value="1"/>
</dbReference>
<dbReference type="PROSITE" id="PS01056">
    <property type="entry name" value="DNA_LIGASE_N2"/>
    <property type="match status" value="1"/>
</dbReference>